<sequence>MEKNMIGKISQVMGPVVDVDFDGYLPIINEAIEVNINLEGTQTRLVLEVAAHLGDGRVRTIAMDMSEGLVRGMNATATGSPIKVPVGEKVLGRIFNVIGETIDDGEQVTDAPMWSIHRQPPALVEQSTTTEMFETGIKVVDLLAPYSKGGKVGLFGGAGVGKTVIIMELIHNVAMGHDGLSVFAGVGERTREGNDLYHEMKDSNVLDKVALCYGQMSEPPGARNRIALTGLTMAEYFRDEKGLDVLMFVDNIFRFAQSGSEMSALLGRIPSAVGYQPTLAREMGALQDRITSTKNGSITSVQAVYVPADDLTDPAPASVFAHLDATTVLNRKIAEKGIYPAVDPLDSSSRLLDPQILGEEHYNVARGVQQTLQKYKDLQDIIAILGMDELSEDDKNIVERARKIEKFLSQPFFVAEVFTGSPGKYVSLADTIKGFKMILSGECDHMPEGSFYMVGGIDEAIEKAQKMK</sequence>
<organism>
    <name type="scientific">Sulfurimonas denitrificans (strain ATCC 33889 / DSM 1251)</name>
    <name type="common">Thiomicrospira denitrificans (strain ATCC 33889 / DSM 1251)</name>
    <dbReference type="NCBI Taxonomy" id="326298"/>
    <lineage>
        <taxon>Bacteria</taxon>
        <taxon>Pseudomonadati</taxon>
        <taxon>Campylobacterota</taxon>
        <taxon>Epsilonproteobacteria</taxon>
        <taxon>Campylobacterales</taxon>
        <taxon>Sulfurimonadaceae</taxon>
        <taxon>Sulfurimonas</taxon>
    </lineage>
</organism>
<proteinExistence type="inferred from homology"/>
<gene>
    <name evidence="1" type="primary">atpD</name>
    <name type="ordered locus">Suden_1403</name>
</gene>
<reference key="1">
    <citation type="journal article" date="2008" name="Appl. Environ. Microbiol.">
        <title>Genome of the epsilonproteobacterial chemolithoautotroph Sulfurimonas denitrificans.</title>
        <authorList>
            <person name="Sievert S.M."/>
            <person name="Scott K.M."/>
            <person name="Klotz M.G."/>
            <person name="Chain P.S.G."/>
            <person name="Hauser L.J."/>
            <person name="Hemp J."/>
            <person name="Huegler M."/>
            <person name="Land M."/>
            <person name="Lapidus A."/>
            <person name="Larimer F.W."/>
            <person name="Lucas S."/>
            <person name="Malfatti S.A."/>
            <person name="Meyer F."/>
            <person name="Paulsen I.T."/>
            <person name="Ren Q."/>
            <person name="Simon J."/>
            <person name="Bailey K."/>
            <person name="Diaz E."/>
            <person name="Fitzpatrick K.A."/>
            <person name="Glover B."/>
            <person name="Gwatney N."/>
            <person name="Korajkic A."/>
            <person name="Long A."/>
            <person name="Mobberley J.M."/>
            <person name="Pantry S.N."/>
            <person name="Pazder G."/>
            <person name="Peterson S."/>
            <person name="Quintanilla J.D."/>
            <person name="Sprinkle R."/>
            <person name="Stephens J."/>
            <person name="Thomas P."/>
            <person name="Vaughn R."/>
            <person name="Weber M.J."/>
            <person name="Wooten L.L."/>
        </authorList>
    </citation>
    <scope>NUCLEOTIDE SEQUENCE [LARGE SCALE GENOMIC DNA]</scope>
    <source>
        <strain>ATCC 33889 / DSM 1251</strain>
    </source>
</reference>
<name>ATPB_SULDN</name>
<protein>
    <recommendedName>
        <fullName evidence="1">ATP synthase subunit beta</fullName>
        <ecNumber evidence="1">7.1.2.2</ecNumber>
    </recommendedName>
    <alternativeName>
        <fullName evidence="1">ATP synthase F1 sector subunit beta</fullName>
    </alternativeName>
    <alternativeName>
        <fullName evidence="1">F-ATPase subunit beta</fullName>
    </alternativeName>
</protein>
<evidence type="ECO:0000255" key="1">
    <source>
        <dbReference type="HAMAP-Rule" id="MF_01347"/>
    </source>
</evidence>
<feature type="chain" id="PRO_0000254416" description="ATP synthase subunit beta">
    <location>
        <begin position="1"/>
        <end position="468"/>
    </location>
</feature>
<feature type="binding site" evidence="1">
    <location>
        <begin position="156"/>
        <end position="163"/>
    </location>
    <ligand>
        <name>ATP</name>
        <dbReference type="ChEBI" id="CHEBI:30616"/>
    </ligand>
</feature>
<accession>Q30QQ1</accession>
<comment type="function">
    <text evidence="1">Produces ATP from ADP in the presence of a proton gradient across the membrane. The catalytic sites are hosted primarily by the beta subunits.</text>
</comment>
<comment type="catalytic activity">
    <reaction evidence="1">
        <text>ATP + H2O + 4 H(+)(in) = ADP + phosphate + 5 H(+)(out)</text>
        <dbReference type="Rhea" id="RHEA:57720"/>
        <dbReference type="ChEBI" id="CHEBI:15377"/>
        <dbReference type="ChEBI" id="CHEBI:15378"/>
        <dbReference type="ChEBI" id="CHEBI:30616"/>
        <dbReference type="ChEBI" id="CHEBI:43474"/>
        <dbReference type="ChEBI" id="CHEBI:456216"/>
        <dbReference type="EC" id="7.1.2.2"/>
    </reaction>
</comment>
<comment type="subunit">
    <text evidence="1">F-type ATPases have 2 components, CF(1) - the catalytic core - and CF(0) - the membrane proton channel. CF(1) has five subunits: alpha(3), beta(3), gamma(1), delta(1), epsilon(1). CF(0) has three main subunits: a(1), b(2) and c(9-12). The alpha and beta chains form an alternating ring which encloses part of the gamma chain. CF(1) is attached to CF(0) by a central stalk formed by the gamma and epsilon chains, while a peripheral stalk is formed by the delta and b chains.</text>
</comment>
<comment type="subcellular location">
    <subcellularLocation>
        <location evidence="1">Cell inner membrane</location>
        <topology evidence="1">Peripheral membrane protein</topology>
    </subcellularLocation>
</comment>
<comment type="similarity">
    <text evidence="1">Belongs to the ATPase alpha/beta chains family.</text>
</comment>
<dbReference type="EC" id="7.1.2.2" evidence="1"/>
<dbReference type="EMBL" id="CP000153">
    <property type="protein sequence ID" value="ABB44680.1"/>
    <property type="molecule type" value="Genomic_DNA"/>
</dbReference>
<dbReference type="SMR" id="Q30QQ1"/>
<dbReference type="STRING" id="326298.Suden_1403"/>
<dbReference type="KEGG" id="tdn:Suden_1403"/>
<dbReference type="eggNOG" id="COG0055">
    <property type="taxonomic scope" value="Bacteria"/>
</dbReference>
<dbReference type="HOGENOM" id="CLU_022398_0_2_7"/>
<dbReference type="Proteomes" id="UP000002714">
    <property type="component" value="Chromosome"/>
</dbReference>
<dbReference type="GO" id="GO:0005886">
    <property type="term" value="C:plasma membrane"/>
    <property type="evidence" value="ECO:0007669"/>
    <property type="project" value="UniProtKB-SubCell"/>
</dbReference>
<dbReference type="GO" id="GO:0045259">
    <property type="term" value="C:proton-transporting ATP synthase complex"/>
    <property type="evidence" value="ECO:0007669"/>
    <property type="project" value="UniProtKB-KW"/>
</dbReference>
<dbReference type="GO" id="GO:0005524">
    <property type="term" value="F:ATP binding"/>
    <property type="evidence" value="ECO:0007669"/>
    <property type="project" value="UniProtKB-UniRule"/>
</dbReference>
<dbReference type="GO" id="GO:0016887">
    <property type="term" value="F:ATP hydrolysis activity"/>
    <property type="evidence" value="ECO:0007669"/>
    <property type="project" value="InterPro"/>
</dbReference>
<dbReference type="GO" id="GO:0046933">
    <property type="term" value="F:proton-transporting ATP synthase activity, rotational mechanism"/>
    <property type="evidence" value="ECO:0007669"/>
    <property type="project" value="UniProtKB-UniRule"/>
</dbReference>
<dbReference type="CDD" id="cd18110">
    <property type="entry name" value="ATP-synt_F1_beta_C"/>
    <property type="match status" value="1"/>
</dbReference>
<dbReference type="CDD" id="cd18115">
    <property type="entry name" value="ATP-synt_F1_beta_N"/>
    <property type="match status" value="1"/>
</dbReference>
<dbReference type="CDD" id="cd01133">
    <property type="entry name" value="F1-ATPase_beta_CD"/>
    <property type="match status" value="1"/>
</dbReference>
<dbReference type="FunFam" id="1.10.1140.10:FF:000001">
    <property type="entry name" value="ATP synthase subunit beta"/>
    <property type="match status" value="1"/>
</dbReference>
<dbReference type="FunFam" id="3.40.50.300:FF:000004">
    <property type="entry name" value="ATP synthase subunit beta"/>
    <property type="match status" value="1"/>
</dbReference>
<dbReference type="Gene3D" id="2.40.10.170">
    <property type="match status" value="1"/>
</dbReference>
<dbReference type="Gene3D" id="1.10.1140.10">
    <property type="entry name" value="Bovine Mitochondrial F1-atpase, Atp Synthase Beta Chain, Chain D, domain 3"/>
    <property type="match status" value="1"/>
</dbReference>
<dbReference type="Gene3D" id="3.40.50.300">
    <property type="entry name" value="P-loop containing nucleotide triphosphate hydrolases"/>
    <property type="match status" value="1"/>
</dbReference>
<dbReference type="HAMAP" id="MF_01347">
    <property type="entry name" value="ATP_synth_beta_bact"/>
    <property type="match status" value="1"/>
</dbReference>
<dbReference type="InterPro" id="IPR003593">
    <property type="entry name" value="AAA+_ATPase"/>
</dbReference>
<dbReference type="InterPro" id="IPR055190">
    <property type="entry name" value="ATP-synt_VA_C"/>
</dbReference>
<dbReference type="InterPro" id="IPR005722">
    <property type="entry name" value="ATP_synth_F1_bsu"/>
</dbReference>
<dbReference type="InterPro" id="IPR020003">
    <property type="entry name" value="ATPase_a/bsu_AS"/>
</dbReference>
<dbReference type="InterPro" id="IPR050053">
    <property type="entry name" value="ATPase_alpha/beta_chains"/>
</dbReference>
<dbReference type="InterPro" id="IPR004100">
    <property type="entry name" value="ATPase_F1/V1/A1_a/bsu_N"/>
</dbReference>
<dbReference type="InterPro" id="IPR036121">
    <property type="entry name" value="ATPase_F1/V1/A1_a/bsu_N_sf"/>
</dbReference>
<dbReference type="InterPro" id="IPR000194">
    <property type="entry name" value="ATPase_F1/V1/A1_a/bsu_nucl-bd"/>
</dbReference>
<dbReference type="InterPro" id="IPR024034">
    <property type="entry name" value="ATPase_F1/V1_b/a_C"/>
</dbReference>
<dbReference type="InterPro" id="IPR027417">
    <property type="entry name" value="P-loop_NTPase"/>
</dbReference>
<dbReference type="NCBIfam" id="TIGR01039">
    <property type="entry name" value="atpD"/>
    <property type="match status" value="1"/>
</dbReference>
<dbReference type="PANTHER" id="PTHR15184">
    <property type="entry name" value="ATP SYNTHASE"/>
    <property type="match status" value="1"/>
</dbReference>
<dbReference type="PANTHER" id="PTHR15184:SF71">
    <property type="entry name" value="ATP SYNTHASE SUBUNIT BETA, MITOCHONDRIAL"/>
    <property type="match status" value="1"/>
</dbReference>
<dbReference type="Pfam" id="PF00006">
    <property type="entry name" value="ATP-synt_ab"/>
    <property type="match status" value="1"/>
</dbReference>
<dbReference type="Pfam" id="PF02874">
    <property type="entry name" value="ATP-synt_ab_N"/>
    <property type="match status" value="1"/>
</dbReference>
<dbReference type="Pfam" id="PF22919">
    <property type="entry name" value="ATP-synt_VA_C"/>
    <property type="match status" value="1"/>
</dbReference>
<dbReference type="SMART" id="SM00382">
    <property type="entry name" value="AAA"/>
    <property type="match status" value="1"/>
</dbReference>
<dbReference type="SUPFAM" id="SSF47917">
    <property type="entry name" value="C-terminal domain of alpha and beta subunits of F1 ATP synthase"/>
    <property type="match status" value="1"/>
</dbReference>
<dbReference type="SUPFAM" id="SSF50615">
    <property type="entry name" value="N-terminal domain of alpha and beta subunits of F1 ATP synthase"/>
    <property type="match status" value="1"/>
</dbReference>
<dbReference type="SUPFAM" id="SSF52540">
    <property type="entry name" value="P-loop containing nucleoside triphosphate hydrolases"/>
    <property type="match status" value="1"/>
</dbReference>
<dbReference type="PROSITE" id="PS00152">
    <property type="entry name" value="ATPASE_ALPHA_BETA"/>
    <property type="match status" value="1"/>
</dbReference>
<keyword id="KW-0066">ATP synthesis</keyword>
<keyword id="KW-0067">ATP-binding</keyword>
<keyword id="KW-0997">Cell inner membrane</keyword>
<keyword id="KW-1003">Cell membrane</keyword>
<keyword id="KW-0139">CF(1)</keyword>
<keyword id="KW-0375">Hydrogen ion transport</keyword>
<keyword id="KW-0406">Ion transport</keyword>
<keyword id="KW-0472">Membrane</keyword>
<keyword id="KW-0547">Nucleotide-binding</keyword>
<keyword id="KW-1185">Reference proteome</keyword>
<keyword id="KW-1278">Translocase</keyword>
<keyword id="KW-0813">Transport</keyword>